<feature type="chain" id="PRO_0000270430" description="Methionine import ATP-binding protein MetN">
    <location>
        <begin position="1"/>
        <end position="358"/>
    </location>
</feature>
<feature type="domain" description="ABC transporter" evidence="1">
    <location>
        <begin position="2"/>
        <end position="247"/>
    </location>
</feature>
<feature type="binding site" evidence="1">
    <location>
        <begin position="38"/>
        <end position="45"/>
    </location>
    <ligand>
        <name>ATP</name>
        <dbReference type="ChEBI" id="CHEBI:30616"/>
    </ligand>
</feature>
<gene>
    <name evidence="1" type="primary">metN</name>
    <name type="ORF">SG7F10.69</name>
</gene>
<proteinExistence type="inferred from homology"/>
<sequence length="358" mass="38234">MITTTGLTKVYQSRDREVTALDGVDLHVREGEVYGVIGQSGAGKSSLIRCVNLLERPTSGTVTVAGQDLTALAGRGRRASAELRRARTRIGMVFQHFNLLGSRTVLDNVELPLEILGVSGRDRTRKAGELLDLVGLADKAKAYPGQLSGGQKQRVGIARALAGDPQVLLSDEATSALDPETTRSILQLLRDLNQQLGLTVLLITHEMDVVKTVCDSAALMRRGRIVESGTVAELLATPGSELAHELFPVGGTASGPDRTVVDVTFQGESASRPVISQLSRTYNIDISILGAAMDTVGGRQIGRMRIELPGRFEENVVPIGFLREQGLQAEVVEDETGPQAATVVPEQTPAALTKEVVK</sequence>
<organism>
    <name type="scientific">Streptomyces griseus</name>
    <dbReference type="NCBI Taxonomy" id="1911"/>
    <lineage>
        <taxon>Bacteria</taxon>
        <taxon>Bacillati</taxon>
        <taxon>Actinomycetota</taxon>
        <taxon>Actinomycetes</taxon>
        <taxon>Kitasatosporales</taxon>
        <taxon>Streptomycetaceae</taxon>
        <taxon>Streptomyces</taxon>
    </lineage>
</organism>
<name>METN_STRGR</name>
<keyword id="KW-0029">Amino-acid transport</keyword>
<keyword id="KW-0067">ATP-binding</keyword>
<keyword id="KW-1003">Cell membrane</keyword>
<keyword id="KW-0472">Membrane</keyword>
<keyword id="KW-0547">Nucleotide-binding</keyword>
<keyword id="KW-1278">Translocase</keyword>
<keyword id="KW-0813">Transport</keyword>
<dbReference type="EC" id="7.4.2.11" evidence="1"/>
<dbReference type="EMBL" id="AJ862840">
    <property type="protein sequence ID" value="CAH94403.1"/>
    <property type="status" value="ALT_INIT"/>
    <property type="molecule type" value="Genomic_DNA"/>
</dbReference>
<dbReference type="RefSeq" id="WP_003970289.1">
    <property type="nucleotide sequence ID" value="NZ_UAVD01000010.1"/>
</dbReference>
<dbReference type="SMR" id="Q53I83"/>
<dbReference type="STRING" id="1911.GCA_001715295_04577"/>
<dbReference type="OrthoDB" id="9802264at2"/>
<dbReference type="GO" id="GO:0005886">
    <property type="term" value="C:plasma membrane"/>
    <property type="evidence" value="ECO:0007669"/>
    <property type="project" value="UniProtKB-SubCell"/>
</dbReference>
<dbReference type="GO" id="GO:0033232">
    <property type="term" value="F:ABC-type D-methionine transporter activity"/>
    <property type="evidence" value="ECO:0007669"/>
    <property type="project" value="UniProtKB-EC"/>
</dbReference>
<dbReference type="GO" id="GO:0005524">
    <property type="term" value="F:ATP binding"/>
    <property type="evidence" value="ECO:0007669"/>
    <property type="project" value="UniProtKB-KW"/>
</dbReference>
<dbReference type="GO" id="GO:0016887">
    <property type="term" value="F:ATP hydrolysis activity"/>
    <property type="evidence" value="ECO:0007669"/>
    <property type="project" value="InterPro"/>
</dbReference>
<dbReference type="CDD" id="cd03258">
    <property type="entry name" value="ABC_MetN_methionine_transporter"/>
    <property type="match status" value="1"/>
</dbReference>
<dbReference type="FunFam" id="3.40.50.300:FF:000056">
    <property type="entry name" value="Cell division ATP-binding protein FtsE"/>
    <property type="match status" value="1"/>
</dbReference>
<dbReference type="Gene3D" id="3.30.70.260">
    <property type="match status" value="1"/>
</dbReference>
<dbReference type="Gene3D" id="3.40.50.300">
    <property type="entry name" value="P-loop containing nucleotide triphosphate hydrolases"/>
    <property type="match status" value="1"/>
</dbReference>
<dbReference type="InterPro" id="IPR003593">
    <property type="entry name" value="AAA+_ATPase"/>
</dbReference>
<dbReference type="InterPro" id="IPR003439">
    <property type="entry name" value="ABC_transporter-like_ATP-bd"/>
</dbReference>
<dbReference type="InterPro" id="IPR017871">
    <property type="entry name" value="ABC_transporter-like_CS"/>
</dbReference>
<dbReference type="InterPro" id="IPR045865">
    <property type="entry name" value="ACT-like_dom_sf"/>
</dbReference>
<dbReference type="InterPro" id="IPR041701">
    <property type="entry name" value="MetN_ABC"/>
</dbReference>
<dbReference type="InterPro" id="IPR050086">
    <property type="entry name" value="MetN_ABC_transporter-like"/>
</dbReference>
<dbReference type="InterPro" id="IPR018449">
    <property type="entry name" value="NIL_domain"/>
</dbReference>
<dbReference type="InterPro" id="IPR027417">
    <property type="entry name" value="P-loop_NTPase"/>
</dbReference>
<dbReference type="PANTHER" id="PTHR43166">
    <property type="entry name" value="AMINO ACID IMPORT ATP-BINDING PROTEIN"/>
    <property type="match status" value="1"/>
</dbReference>
<dbReference type="PANTHER" id="PTHR43166:SF30">
    <property type="entry name" value="METHIONINE IMPORT ATP-BINDING PROTEIN METN"/>
    <property type="match status" value="1"/>
</dbReference>
<dbReference type="Pfam" id="PF00005">
    <property type="entry name" value="ABC_tran"/>
    <property type="match status" value="1"/>
</dbReference>
<dbReference type="Pfam" id="PF09383">
    <property type="entry name" value="NIL"/>
    <property type="match status" value="1"/>
</dbReference>
<dbReference type="SMART" id="SM00382">
    <property type="entry name" value="AAA"/>
    <property type="match status" value="1"/>
</dbReference>
<dbReference type="SMART" id="SM00930">
    <property type="entry name" value="NIL"/>
    <property type="match status" value="1"/>
</dbReference>
<dbReference type="SUPFAM" id="SSF55021">
    <property type="entry name" value="ACT-like"/>
    <property type="match status" value="1"/>
</dbReference>
<dbReference type="SUPFAM" id="SSF52540">
    <property type="entry name" value="P-loop containing nucleoside triphosphate hydrolases"/>
    <property type="match status" value="1"/>
</dbReference>
<dbReference type="PROSITE" id="PS00211">
    <property type="entry name" value="ABC_TRANSPORTER_1"/>
    <property type="match status" value="1"/>
</dbReference>
<dbReference type="PROSITE" id="PS50893">
    <property type="entry name" value="ABC_TRANSPORTER_2"/>
    <property type="match status" value="1"/>
</dbReference>
<dbReference type="PROSITE" id="PS51264">
    <property type="entry name" value="METN"/>
    <property type="match status" value="1"/>
</dbReference>
<reference key="1">
    <citation type="submission" date="2004-11" db="EMBL/GenBank/DDBJ databases">
        <title>Cloning and heterologous expression of the str/sts-gene cluster from a Streptomyces griseus DSM40236 PAC library: the cluster for streptomycin production lies in a highly conserved genomic area.</title>
        <authorList>
            <person name="van der Geize R."/>
            <person name="Dijkhuizen L."/>
            <person name="Wellington E.M."/>
            <person name="Piepersberg W."/>
        </authorList>
    </citation>
    <scope>NUCLEOTIDE SEQUENCE [GENOMIC DNA]</scope>
    <source>
        <strain>ATCC 23345 / DSM 40236 / JCM 4644 / NBRC 12875 / NCIMB 13023 / NRRL B-2682 / VKM Ac-800 / IMRU 3463</strain>
    </source>
</reference>
<accession>Q53I83</accession>
<protein>
    <recommendedName>
        <fullName evidence="1">Methionine import ATP-binding protein MetN</fullName>
        <ecNumber evidence="1">7.4.2.11</ecNumber>
    </recommendedName>
</protein>
<comment type="function">
    <text evidence="1">Part of the ABC transporter complex MetNIQ involved in methionine import. Responsible for energy coupling to the transport system.</text>
</comment>
<comment type="catalytic activity">
    <reaction evidence="1">
        <text>L-methionine(out) + ATP + H2O = L-methionine(in) + ADP + phosphate + H(+)</text>
        <dbReference type="Rhea" id="RHEA:29779"/>
        <dbReference type="ChEBI" id="CHEBI:15377"/>
        <dbReference type="ChEBI" id="CHEBI:15378"/>
        <dbReference type="ChEBI" id="CHEBI:30616"/>
        <dbReference type="ChEBI" id="CHEBI:43474"/>
        <dbReference type="ChEBI" id="CHEBI:57844"/>
        <dbReference type="ChEBI" id="CHEBI:456216"/>
        <dbReference type="EC" id="7.4.2.11"/>
    </reaction>
</comment>
<comment type="catalytic activity">
    <reaction evidence="1">
        <text>D-methionine(out) + ATP + H2O = D-methionine(in) + ADP + phosphate + H(+)</text>
        <dbReference type="Rhea" id="RHEA:29767"/>
        <dbReference type="ChEBI" id="CHEBI:15377"/>
        <dbReference type="ChEBI" id="CHEBI:15378"/>
        <dbReference type="ChEBI" id="CHEBI:30616"/>
        <dbReference type="ChEBI" id="CHEBI:43474"/>
        <dbReference type="ChEBI" id="CHEBI:57932"/>
        <dbReference type="ChEBI" id="CHEBI:456216"/>
        <dbReference type="EC" id="7.4.2.11"/>
    </reaction>
</comment>
<comment type="subunit">
    <text evidence="1">The complex is composed of two ATP-binding proteins (MetN), two transmembrane proteins (MetI) and a solute-binding protein (MetQ).</text>
</comment>
<comment type="subcellular location">
    <subcellularLocation>
        <location evidence="1">Cell membrane</location>
        <topology evidence="1">Peripheral membrane protein</topology>
    </subcellularLocation>
</comment>
<comment type="similarity">
    <text evidence="1">Belongs to the ABC transporter superfamily. Methionine importer (TC 3.A.1.24) family.</text>
</comment>
<comment type="sequence caution" evidence="2">
    <conflict type="erroneous initiation">
        <sequence resource="EMBL-CDS" id="CAH94403"/>
    </conflict>
</comment>
<evidence type="ECO:0000255" key="1">
    <source>
        <dbReference type="HAMAP-Rule" id="MF_01719"/>
    </source>
</evidence>
<evidence type="ECO:0000305" key="2"/>